<feature type="chain" id="PRO_1000216417" description="Cytoskeleton protein RodZ">
    <location>
        <begin position="1"/>
        <end position="337"/>
    </location>
</feature>
<feature type="topological domain" description="Cytoplasmic" evidence="1">
    <location>
        <begin position="1"/>
        <end position="111"/>
    </location>
</feature>
<feature type="transmembrane region" description="Helical; Signal-anchor for type II membrane protein" evidence="1">
    <location>
        <begin position="112"/>
        <end position="132"/>
    </location>
</feature>
<feature type="topological domain" description="Periplasmic" evidence="1">
    <location>
        <begin position="133"/>
        <end position="337"/>
    </location>
</feature>
<feature type="domain" description="HTH cro/C1-type" evidence="1">
    <location>
        <begin position="19"/>
        <end position="71"/>
    </location>
</feature>
<feature type="DNA-binding region" description="H-T-H motif" evidence="1">
    <location>
        <begin position="30"/>
        <end position="49"/>
    </location>
</feature>
<feature type="region of interest" description="Disordered" evidence="2">
    <location>
        <begin position="144"/>
        <end position="235"/>
    </location>
</feature>
<feature type="compositionally biased region" description="Polar residues" evidence="2">
    <location>
        <begin position="144"/>
        <end position="167"/>
    </location>
</feature>
<feature type="compositionally biased region" description="Low complexity" evidence="2">
    <location>
        <begin position="168"/>
        <end position="207"/>
    </location>
</feature>
<feature type="compositionally biased region" description="Polar residues" evidence="2">
    <location>
        <begin position="208"/>
        <end position="218"/>
    </location>
</feature>
<feature type="compositionally biased region" description="Low complexity" evidence="2">
    <location>
        <begin position="219"/>
        <end position="235"/>
    </location>
</feature>
<keyword id="KW-0997">Cell inner membrane</keyword>
<keyword id="KW-1003">Cell membrane</keyword>
<keyword id="KW-0133">Cell shape</keyword>
<keyword id="KW-0238">DNA-binding</keyword>
<keyword id="KW-0472">Membrane</keyword>
<keyword id="KW-0735">Signal-anchor</keyword>
<keyword id="KW-0812">Transmembrane</keyword>
<keyword id="KW-1133">Transmembrane helix</keyword>
<proteinExistence type="inferred from homology"/>
<accession>C4ZX91</accession>
<dbReference type="EMBL" id="CP001396">
    <property type="protein sequence ID" value="ACR62354.1"/>
    <property type="molecule type" value="Genomic_DNA"/>
</dbReference>
<dbReference type="RefSeq" id="WP_001090866.1">
    <property type="nucleotide sequence ID" value="NC_012759.1"/>
</dbReference>
<dbReference type="SMR" id="C4ZX91"/>
<dbReference type="KEGG" id="ebw:BWG_2280"/>
<dbReference type="HOGENOM" id="CLU_047530_3_1_6"/>
<dbReference type="GO" id="GO:0005886">
    <property type="term" value="C:plasma membrane"/>
    <property type="evidence" value="ECO:0007669"/>
    <property type="project" value="UniProtKB-SubCell"/>
</dbReference>
<dbReference type="GO" id="GO:0003677">
    <property type="term" value="F:DNA binding"/>
    <property type="evidence" value="ECO:0007669"/>
    <property type="project" value="UniProtKB-KW"/>
</dbReference>
<dbReference type="GO" id="GO:0008360">
    <property type="term" value="P:regulation of cell shape"/>
    <property type="evidence" value="ECO:0007669"/>
    <property type="project" value="UniProtKB-UniRule"/>
</dbReference>
<dbReference type="CDD" id="cd00093">
    <property type="entry name" value="HTH_XRE"/>
    <property type="match status" value="1"/>
</dbReference>
<dbReference type="FunFam" id="1.10.260.40:FF:000014">
    <property type="entry name" value="Cytoskeleton protein RodZ"/>
    <property type="match status" value="1"/>
</dbReference>
<dbReference type="Gene3D" id="1.10.260.40">
    <property type="entry name" value="lambda repressor-like DNA-binding domains"/>
    <property type="match status" value="1"/>
</dbReference>
<dbReference type="HAMAP" id="MF_02017">
    <property type="entry name" value="RodZ"/>
    <property type="match status" value="1"/>
</dbReference>
<dbReference type="InterPro" id="IPR050400">
    <property type="entry name" value="Bact_Cytoskel_RodZ"/>
</dbReference>
<dbReference type="InterPro" id="IPR001387">
    <property type="entry name" value="Cro/C1-type_HTH"/>
</dbReference>
<dbReference type="InterPro" id="IPR010982">
    <property type="entry name" value="Lambda_DNA-bd_dom_sf"/>
</dbReference>
<dbReference type="InterPro" id="IPR023690">
    <property type="entry name" value="RodZ"/>
</dbReference>
<dbReference type="InterPro" id="IPR025194">
    <property type="entry name" value="RodZ-like_C"/>
</dbReference>
<dbReference type="NCBIfam" id="NF008109">
    <property type="entry name" value="PRK10856.1"/>
    <property type="match status" value="1"/>
</dbReference>
<dbReference type="PANTHER" id="PTHR34475">
    <property type="match status" value="1"/>
</dbReference>
<dbReference type="PANTHER" id="PTHR34475:SF1">
    <property type="entry name" value="CYTOSKELETON PROTEIN RODZ"/>
    <property type="match status" value="1"/>
</dbReference>
<dbReference type="Pfam" id="PF13413">
    <property type="entry name" value="HTH_25"/>
    <property type="match status" value="1"/>
</dbReference>
<dbReference type="Pfam" id="PF13464">
    <property type="entry name" value="RodZ_C"/>
    <property type="match status" value="1"/>
</dbReference>
<dbReference type="SMART" id="SM00530">
    <property type="entry name" value="HTH_XRE"/>
    <property type="match status" value="1"/>
</dbReference>
<dbReference type="SUPFAM" id="SSF47413">
    <property type="entry name" value="lambda repressor-like DNA-binding domains"/>
    <property type="match status" value="1"/>
</dbReference>
<dbReference type="PROSITE" id="PS50943">
    <property type="entry name" value="HTH_CROC1"/>
    <property type="match status" value="1"/>
</dbReference>
<comment type="function">
    <text evidence="1">Cytoskeletal protein that is involved in cell-shape control through regulation of the length of the long axis.</text>
</comment>
<comment type="subcellular location">
    <subcellularLocation>
        <location evidence="1">Cell inner membrane</location>
        <topology evidence="1">Single-pass type II membrane protein</topology>
    </subcellularLocation>
    <text evidence="1">Forms helical filaments along the long axis of the cell.</text>
</comment>
<comment type="domain">
    <text evidence="1">The helix-turn-helix (HTH) motif in the cytoplasmic domain of the N-terminus is involved in the formation of spirals to maintain the rigid rod shape. As this protein is anchored in the cytoplasmic membrane, the HTH motif may contribute to protein-protein interactions to form the RodZ helix, which is localized beneath the cytoplasmic membrane. The C-terminal domain may be critical for determination of the rod shape by probably interacting with enzymes required for synthesis of the peptidoglycan layer, including PBPs in the periplasm.</text>
</comment>
<comment type="similarity">
    <text evidence="1">Belongs to the RodZ family.</text>
</comment>
<name>RODZ_ECOBW</name>
<sequence>MNTEATHDQNEALTTGARLRNAREQLGLSQQAVAERLCLKVSTVRDIEEDKAPADLASTFLRGYIRSYARLVHIPEEELLPGLEKQAPLRAAKVAPMQSFSLGKRRKKRDGWLMTFTWLVLFVVIGLSGAWWWQDRKAQQEEITTMADQSSAELSSNSEQGQSVPLNTSTTTDPATTSTPPASVDTTATNTQTPAVTAPAPAVDPQQNAVVSPSQANVDTAATPAPTAATTPDGAAPLPTDQAGVTTPVADPNALVMNFTADCWLEVTDATGKKLFSGMQRKDGNLNLTGQAPYKLKIGAPAAVQIQYQGKPVDLSRFIRTNQVARLTLNAEQSPAQ</sequence>
<reference key="1">
    <citation type="journal article" date="2009" name="J. Bacteriol.">
        <title>Genomic sequencing reveals regulatory mutations and recombinational events in the widely used MC4100 lineage of Escherichia coli K-12.</title>
        <authorList>
            <person name="Ferenci T."/>
            <person name="Zhou Z."/>
            <person name="Betteridge T."/>
            <person name="Ren Y."/>
            <person name="Liu Y."/>
            <person name="Feng L."/>
            <person name="Reeves P.R."/>
            <person name="Wang L."/>
        </authorList>
    </citation>
    <scope>NUCLEOTIDE SEQUENCE [LARGE SCALE GENOMIC DNA]</scope>
    <source>
        <strain>K12 / MC4100 / BW2952</strain>
    </source>
</reference>
<protein>
    <recommendedName>
        <fullName evidence="1">Cytoskeleton protein RodZ</fullName>
    </recommendedName>
</protein>
<gene>
    <name evidence="1" type="primary">rodZ</name>
    <name type="ordered locus">BWG_2280</name>
</gene>
<evidence type="ECO:0000255" key="1">
    <source>
        <dbReference type="HAMAP-Rule" id="MF_02017"/>
    </source>
</evidence>
<evidence type="ECO:0000256" key="2">
    <source>
        <dbReference type="SAM" id="MobiDB-lite"/>
    </source>
</evidence>
<organism>
    <name type="scientific">Escherichia coli (strain K12 / MC4100 / BW2952)</name>
    <dbReference type="NCBI Taxonomy" id="595496"/>
    <lineage>
        <taxon>Bacteria</taxon>
        <taxon>Pseudomonadati</taxon>
        <taxon>Pseudomonadota</taxon>
        <taxon>Gammaproteobacteria</taxon>
        <taxon>Enterobacterales</taxon>
        <taxon>Enterobacteriaceae</taxon>
        <taxon>Escherichia</taxon>
    </lineage>
</organism>